<name>Y912_STAAC</name>
<organism>
    <name type="scientific">Staphylococcus aureus (strain COL)</name>
    <dbReference type="NCBI Taxonomy" id="93062"/>
    <lineage>
        <taxon>Bacteria</taxon>
        <taxon>Bacillati</taxon>
        <taxon>Bacillota</taxon>
        <taxon>Bacilli</taxon>
        <taxon>Bacillales</taxon>
        <taxon>Staphylococcaceae</taxon>
        <taxon>Staphylococcus</taxon>
    </lineage>
</organism>
<evidence type="ECO:0000256" key="1">
    <source>
        <dbReference type="SAM" id="MobiDB-lite"/>
    </source>
</evidence>
<evidence type="ECO:0000305" key="2"/>
<feature type="chain" id="PRO_0000272672" description="UPF0337 protein SACOL0912">
    <location>
        <begin position="1"/>
        <end position="64"/>
    </location>
</feature>
<feature type="region of interest" description="Disordered" evidence="1">
    <location>
        <begin position="1"/>
        <end position="40"/>
    </location>
</feature>
<feature type="compositionally biased region" description="Basic and acidic residues" evidence="1">
    <location>
        <begin position="25"/>
        <end position="40"/>
    </location>
</feature>
<reference key="1">
    <citation type="journal article" date="2005" name="J. Bacteriol.">
        <title>Insights on evolution of virulence and resistance from the complete genome analysis of an early methicillin-resistant Staphylococcus aureus strain and a biofilm-producing methicillin-resistant Staphylococcus epidermidis strain.</title>
        <authorList>
            <person name="Gill S.R."/>
            <person name="Fouts D.E."/>
            <person name="Archer G.L."/>
            <person name="Mongodin E.F."/>
            <person name="DeBoy R.T."/>
            <person name="Ravel J."/>
            <person name="Paulsen I.T."/>
            <person name="Kolonay J.F."/>
            <person name="Brinkac L.M."/>
            <person name="Beanan M.J."/>
            <person name="Dodson R.J."/>
            <person name="Daugherty S.C."/>
            <person name="Madupu R."/>
            <person name="Angiuoli S.V."/>
            <person name="Durkin A.S."/>
            <person name="Haft D.H."/>
            <person name="Vamathevan J.J."/>
            <person name="Khouri H."/>
            <person name="Utterback T.R."/>
            <person name="Lee C."/>
            <person name="Dimitrov G."/>
            <person name="Jiang L."/>
            <person name="Qin H."/>
            <person name="Weidman J."/>
            <person name="Tran K."/>
            <person name="Kang K.H."/>
            <person name="Hance I.R."/>
            <person name="Nelson K.E."/>
            <person name="Fraser C.M."/>
        </authorList>
    </citation>
    <scope>NUCLEOTIDE SEQUENCE [LARGE SCALE GENOMIC DNA]</scope>
    <source>
        <strain>COL</strain>
    </source>
</reference>
<proteinExistence type="inferred from homology"/>
<gene>
    <name type="ordered locus">SACOL0912</name>
</gene>
<protein>
    <recommendedName>
        <fullName>UPF0337 protein SACOL0912</fullName>
    </recommendedName>
</protein>
<comment type="similarity">
    <text evidence="2">Belongs to the UPF0337 (CsbD) family.</text>
</comment>
<dbReference type="EMBL" id="CP000046">
    <property type="protein sequence ID" value="AAW37882.1"/>
    <property type="molecule type" value="Genomic_DNA"/>
</dbReference>
<dbReference type="RefSeq" id="WP_000752917.1">
    <property type="nucleotide sequence ID" value="NZ_JBGOFO010000002.1"/>
</dbReference>
<dbReference type="SMR" id="Q5HHH4"/>
<dbReference type="KEGG" id="sac:SACOL0912"/>
<dbReference type="HOGENOM" id="CLU_135567_0_3_9"/>
<dbReference type="Proteomes" id="UP000000530">
    <property type="component" value="Chromosome"/>
</dbReference>
<dbReference type="Gene3D" id="1.10.1470.10">
    <property type="entry name" value="YjbJ"/>
    <property type="match status" value="1"/>
</dbReference>
<dbReference type="InterPro" id="IPR008462">
    <property type="entry name" value="CsbD"/>
</dbReference>
<dbReference type="InterPro" id="IPR050423">
    <property type="entry name" value="UPF0337_stress_rsp"/>
</dbReference>
<dbReference type="InterPro" id="IPR036629">
    <property type="entry name" value="YjbJ_sf"/>
</dbReference>
<dbReference type="PANTHER" id="PTHR34977">
    <property type="entry name" value="UPF0337 PROTEIN YJBJ"/>
    <property type="match status" value="1"/>
</dbReference>
<dbReference type="PANTHER" id="PTHR34977:SF1">
    <property type="entry name" value="UPF0337 PROTEIN YJBJ"/>
    <property type="match status" value="1"/>
</dbReference>
<dbReference type="Pfam" id="PF05532">
    <property type="entry name" value="CsbD"/>
    <property type="match status" value="1"/>
</dbReference>
<dbReference type="SUPFAM" id="SSF69047">
    <property type="entry name" value="Hypothetical protein YjbJ"/>
    <property type="match status" value="1"/>
</dbReference>
<accession>Q5HHH4</accession>
<sequence length="64" mass="7019">MADESKFEQAKGNVKETVGNVTDNKNLENEGKEDKASGKAKEFVENAKEKATDFIDKVKGNKGE</sequence>